<keyword id="KW-0067">ATP-binding</keyword>
<keyword id="KW-0963">Cytoplasm</keyword>
<keyword id="KW-0227">DNA damage</keyword>
<keyword id="KW-0233">DNA recombination</keyword>
<keyword id="KW-0234">DNA repair</keyword>
<keyword id="KW-0238">DNA-binding</keyword>
<keyword id="KW-0547">Nucleotide-binding</keyword>
<keyword id="KW-0742">SOS response</keyword>
<dbReference type="EMBL" id="AM286415">
    <property type="protein sequence ID" value="CAL10930.1"/>
    <property type="molecule type" value="Genomic_DNA"/>
</dbReference>
<dbReference type="RefSeq" id="WP_005166464.1">
    <property type="nucleotide sequence ID" value="NC_008800.1"/>
</dbReference>
<dbReference type="RefSeq" id="YP_001005168.1">
    <property type="nucleotide sequence ID" value="NC_008800.1"/>
</dbReference>
<dbReference type="SMR" id="A1JK01"/>
<dbReference type="GeneID" id="31410238"/>
<dbReference type="KEGG" id="yen:YE0829"/>
<dbReference type="PATRIC" id="fig|393305.7.peg.924"/>
<dbReference type="eggNOG" id="COG0468">
    <property type="taxonomic scope" value="Bacteria"/>
</dbReference>
<dbReference type="HOGENOM" id="CLU_040469_3_2_6"/>
<dbReference type="OrthoDB" id="9776733at2"/>
<dbReference type="Proteomes" id="UP000000642">
    <property type="component" value="Chromosome"/>
</dbReference>
<dbReference type="GO" id="GO:0005829">
    <property type="term" value="C:cytosol"/>
    <property type="evidence" value="ECO:0007669"/>
    <property type="project" value="TreeGrafter"/>
</dbReference>
<dbReference type="GO" id="GO:0005524">
    <property type="term" value="F:ATP binding"/>
    <property type="evidence" value="ECO:0007669"/>
    <property type="project" value="UniProtKB-UniRule"/>
</dbReference>
<dbReference type="GO" id="GO:0016887">
    <property type="term" value="F:ATP hydrolysis activity"/>
    <property type="evidence" value="ECO:0007669"/>
    <property type="project" value="InterPro"/>
</dbReference>
<dbReference type="GO" id="GO:0140664">
    <property type="term" value="F:ATP-dependent DNA damage sensor activity"/>
    <property type="evidence" value="ECO:0007669"/>
    <property type="project" value="InterPro"/>
</dbReference>
<dbReference type="GO" id="GO:0003684">
    <property type="term" value="F:damaged DNA binding"/>
    <property type="evidence" value="ECO:0007669"/>
    <property type="project" value="UniProtKB-UniRule"/>
</dbReference>
<dbReference type="GO" id="GO:0003697">
    <property type="term" value="F:single-stranded DNA binding"/>
    <property type="evidence" value="ECO:0007669"/>
    <property type="project" value="UniProtKB-UniRule"/>
</dbReference>
<dbReference type="GO" id="GO:0006310">
    <property type="term" value="P:DNA recombination"/>
    <property type="evidence" value="ECO:0007669"/>
    <property type="project" value="UniProtKB-UniRule"/>
</dbReference>
<dbReference type="GO" id="GO:0006281">
    <property type="term" value="P:DNA repair"/>
    <property type="evidence" value="ECO:0007669"/>
    <property type="project" value="UniProtKB-UniRule"/>
</dbReference>
<dbReference type="GO" id="GO:0009432">
    <property type="term" value="P:SOS response"/>
    <property type="evidence" value="ECO:0007669"/>
    <property type="project" value="UniProtKB-UniRule"/>
</dbReference>
<dbReference type="CDD" id="cd00983">
    <property type="entry name" value="RecA"/>
    <property type="match status" value="1"/>
</dbReference>
<dbReference type="FunFam" id="3.40.50.300:FF:000087">
    <property type="entry name" value="Recombinase RecA"/>
    <property type="match status" value="1"/>
</dbReference>
<dbReference type="Gene3D" id="3.40.50.300">
    <property type="entry name" value="P-loop containing nucleotide triphosphate hydrolases"/>
    <property type="match status" value="1"/>
</dbReference>
<dbReference type="HAMAP" id="MF_00268">
    <property type="entry name" value="RecA"/>
    <property type="match status" value="1"/>
</dbReference>
<dbReference type="InterPro" id="IPR003593">
    <property type="entry name" value="AAA+_ATPase"/>
</dbReference>
<dbReference type="InterPro" id="IPR013765">
    <property type="entry name" value="DNA_recomb/repair_RecA"/>
</dbReference>
<dbReference type="InterPro" id="IPR020584">
    <property type="entry name" value="DNA_recomb/repair_RecA_CS"/>
</dbReference>
<dbReference type="InterPro" id="IPR027417">
    <property type="entry name" value="P-loop_NTPase"/>
</dbReference>
<dbReference type="InterPro" id="IPR049261">
    <property type="entry name" value="RecA-like_C"/>
</dbReference>
<dbReference type="InterPro" id="IPR049428">
    <property type="entry name" value="RecA-like_N"/>
</dbReference>
<dbReference type="InterPro" id="IPR020588">
    <property type="entry name" value="RecA_ATP-bd"/>
</dbReference>
<dbReference type="InterPro" id="IPR023400">
    <property type="entry name" value="RecA_C_sf"/>
</dbReference>
<dbReference type="InterPro" id="IPR020587">
    <property type="entry name" value="RecA_monomer-monomer_interface"/>
</dbReference>
<dbReference type="NCBIfam" id="TIGR02012">
    <property type="entry name" value="tigrfam_recA"/>
    <property type="match status" value="1"/>
</dbReference>
<dbReference type="PANTHER" id="PTHR45900:SF1">
    <property type="entry name" value="MITOCHONDRIAL DNA REPAIR PROTEIN RECA HOMOLOG-RELATED"/>
    <property type="match status" value="1"/>
</dbReference>
<dbReference type="PANTHER" id="PTHR45900">
    <property type="entry name" value="RECA"/>
    <property type="match status" value="1"/>
</dbReference>
<dbReference type="Pfam" id="PF00154">
    <property type="entry name" value="RecA"/>
    <property type="match status" value="1"/>
</dbReference>
<dbReference type="Pfam" id="PF21096">
    <property type="entry name" value="RecA_C"/>
    <property type="match status" value="1"/>
</dbReference>
<dbReference type="PRINTS" id="PR00142">
    <property type="entry name" value="RECA"/>
</dbReference>
<dbReference type="SMART" id="SM00382">
    <property type="entry name" value="AAA"/>
    <property type="match status" value="1"/>
</dbReference>
<dbReference type="SUPFAM" id="SSF52540">
    <property type="entry name" value="P-loop containing nucleoside triphosphate hydrolases"/>
    <property type="match status" value="1"/>
</dbReference>
<dbReference type="SUPFAM" id="SSF54752">
    <property type="entry name" value="RecA protein, C-terminal domain"/>
    <property type="match status" value="1"/>
</dbReference>
<dbReference type="PROSITE" id="PS00321">
    <property type="entry name" value="RECA_1"/>
    <property type="match status" value="1"/>
</dbReference>
<dbReference type="PROSITE" id="PS50162">
    <property type="entry name" value="RECA_2"/>
    <property type="match status" value="1"/>
</dbReference>
<dbReference type="PROSITE" id="PS50163">
    <property type="entry name" value="RECA_3"/>
    <property type="match status" value="1"/>
</dbReference>
<gene>
    <name evidence="1" type="primary">recA</name>
    <name type="ordered locus">YE0829</name>
</gene>
<comment type="function">
    <text evidence="1">Can catalyze the hydrolysis of ATP in the presence of single-stranded DNA, the ATP-dependent uptake of single-stranded DNA by duplex DNA, and the ATP-dependent hybridization of homologous single-stranded DNAs. It interacts with LexA causing its activation and leading to its autocatalytic cleavage.</text>
</comment>
<comment type="subcellular location">
    <subcellularLocation>
        <location evidence="1">Cytoplasm</location>
    </subcellularLocation>
</comment>
<comment type="similarity">
    <text evidence="1">Belongs to the RecA family.</text>
</comment>
<reference key="1">
    <citation type="journal article" date="2006" name="PLoS Genet.">
        <title>The complete genome sequence and comparative genome analysis of the high pathogenicity Yersinia enterocolitica strain 8081.</title>
        <authorList>
            <person name="Thomson N.R."/>
            <person name="Howard S."/>
            <person name="Wren B.W."/>
            <person name="Holden M.T.G."/>
            <person name="Crossman L."/>
            <person name="Challis G.L."/>
            <person name="Churcher C."/>
            <person name="Mungall K."/>
            <person name="Brooks K."/>
            <person name="Chillingworth T."/>
            <person name="Feltwell T."/>
            <person name="Abdellah Z."/>
            <person name="Hauser H."/>
            <person name="Jagels K."/>
            <person name="Maddison M."/>
            <person name="Moule S."/>
            <person name="Sanders M."/>
            <person name="Whitehead S."/>
            <person name="Quail M.A."/>
            <person name="Dougan G."/>
            <person name="Parkhill J."/>
            <person name="Prentice M.B."/>
        </authorList>
    </citation>
    <scope>NUCLEOTIDE SEQUENCE [LARGE SCALE GENOMIC DNA]</scope>
    <source>
        <strain>NCTC 13174 / 8081</strain>
    </source>
</reference>
<protein>
    <recommendedName>
        <fullName evidence="1">Protein RecA</fullName>
    </recommendedName>
    <alternativeName>
        <fullName evidence="1">Recombinase A</fullName>
    </alternativeName>
</protein>
<organism>
    <name type="scientific">Yersinia enterocolitica serotype O:8 / biotype 1B (strain NCTC 13174 / 8081)</name>
    <dbReference type="NCBI Taxonomy" id="393305"/>
    <lineage>
        <taxon>Bacteria</taxon>
        <taxon>Pseudomonadati</taxon>
        <taxon>Pseudomonadota</taxon>
        <taxon>Gammaproteobacteria</taxon>
        <taxon>Enterobacterales</taxon>
        <taxon>Yersiniaceae</taxon>
        <taxon>Yersinia</taxon>
    </lineage>
</organism>
<name>RECA_YERE8</name>
<proteinExistence type="inferred from homology"/>
<accession>A1JK01</accession>
<evidence type="ECO:0000255" key="1">
    <source>
        <dbReference type="HAMAP-Rule" id="MF_00268"/>
    </source>
</evidence>
<sequence>MAIDENKQKALAAALGQIEKQFGKGSIMRLGEDRSMDVETISTGSLSLDIALGAGGLPMGRIVEIYGPESSGKTTLTLQVIAAAQREGKTCAFIDAEHALDPIYAKKLGVDIDNLLCSQPDTGEQALEICDALTRSGAVDVIIVDSVAALTPKAEIEGEIGDSHMGLAARMMSQAMRKLAGNLKNANTLLIFINQIRMKIGVMFGNPETTTGGNALKFYASVRLDIRRIGAVKEGDVVVGSETRVKVVKNKIAAPFKQAEFQILYGEGININGELVDLGVKHKLIEKAGAWYSYNGDKIGQGKANASNYLKENPAVAAELDKKLREMLLNGGNGEQPVATAAFADEADETSEEF</sequence>
<feature type="chain" id="PRO_1000048034" description="Protein RecA">
    <location>
        <begin position="1"/>
        <end position="354"/>
    </location>
</feature>
<feature type="binding site" evidence="1">
    <location>
        <begin position="67"/>
        <end position="74"/>
    </location>
    <ligand>
        <name>ATP</name>
        <dbReference type="ChEBI" id="CHEBI:30616"/>
    </ligand>
</feature>